<sequence length="243" mass="28122">MGKYNLTALQVRKTAIDSIAAGKKGDLPRWVNVVGDIPPAQILVRERPQQHPLVRQRMKTIPGNPTPQPVFQVQTKRVKPKKASRMFLPVEIKYEEDQLRKEFFRDHPWELARPRILVESSGKDSERYNWSRMQQPGKKLDGESVVQRQLWLLNNVPDMTKSRAYDIARREFYRLRLQEDIERRVAVEEAEATGAVFGPSRLEIGMELENQQFEAWKSWAKTEAQIVDQASTSEDGSENQSLP</sequence>
<keyword id="KW-0496">Mitochondrion</keyword>
<keyword id="KW-1185">Reference proteome</keyword>
<keyword id="KW-0687">Ribonucleoprotein</keyword>
<keyword id="KW-0689">Ribosomal protein</keyword>
<accession>Q5B4U6</accession>
<accession>C8V8Q5</accession>
<feature type="chain" id="PRO_0000343551" description="Small ribosomal subunit protein mS23">
    <location>
        <begin position="1"/>
        <end position="243"/>
    </location>
</feature>
<reference key="1">
    <citation type="journal article" date="2005" name="Nature">
        <title>Sequencing of Aspergillus nidulans and comparative analysis with A. fumigatus and A. oryzae.</title>
        <authorList>
            <person name="Galagan J.E."/>
            <person name="Calvo S.E."/>
            <person name="Cuomo C."/>
            <person name="Ma L.-J."/>
            <person name="Wortman J.R."/>
            <person name="Batzoglou S."/>
            <person name="Lee S.-I."/>
            <person name="Bastuerkmen M."/>
            <person name="Spevak C.C."/>
            <person name="Clutterbuck J."/>
            <person name="Kapitonov V."/>
            <person name="Jurka J."/>
            <person name="Scazzocchio C."/>
            <person name="Farman M.L."/>
            <person name="Butler J."/>
            <person name="Purcell S."/>
            <person name="Harris S."/>
            <person name="Braus G.H."/>
            <person name="Draht O."/>
            <person name="Busch S."/>
            <person name="D'Enfert C."/>
            <person name="Bouchier C."/>
            <person name="Goldman G.H."/>
            <person name="Bell-Pedersen D."/>
            <person name="Griffiths-Jones S."/>
            <person name="Doonan J.H."/>
            <person name="Yu J."/>
            <person name="Vienken K."/>
            <person name="Pain A."/>
            <person name="Freitag M."/>
            <person name="Selker E.U."/>
            <person name="Archer D.B."/>
            <person name="Penalva M.A."/>
            <person name="Oakley B.R."/>
            <person name="Momany M."/>
            <person name="Tanaka T."/>
            <person name="Kumagai T."/>
            <person name="Asai K."/>
            <person name="Machida M."/>
            <person name="Nierman W.C."/>
            <person name="Denning D.W."/>
            <person name="Caddick M.X."/>
            <person name="Hynes M."/>
            <person name="Paoletti M."/>
            <person name="Fischer R."/>
            <person name="Miller B.L."/>
            <person name="Dyer P.S."/>
            <person name="Sachs M.S."/>
            <person name="Osmani S.A."/>
            <person name="Birren B.W."/>
        </authorList>
    </citation>
    <scope>NUCLEOTIDE SEQUENCE [LARGE SCALE GENOMIC DNA]</scope>
    <source>
        <strain>FGSC A4 / ATCC 38163 / CBS 112.46 / NRRL 194 / M139</strain>
    </source>
</reference>
<reference key="2">
    <citation type="journal article" date="2009" name="Fungal Genet. Biol.">
        <title>The 2008 update of the Aspergillus nidulans genome annotation: a community effort.</title>
        <authorList>
            <person name="Wortman J.R."/>
            <person name="Gilsenan J.M."/>
            <person name="Joardar V."/>
            <person name="Deegan J."/>
            <person name="Clutterbuck J."/>
            <person name="Andersen M.R."/>
            <person name="Archer D."/>
            <person name="Bencina M."/>
            <person name="Braus G."/>
            <person name="Coutinho P."/>
            <person name="von Dohren H."/>
            <person name="Doonan J."/>
            <person name="Driessen A.J."/>
            <person name="Durek P."/>
            <person name="Espeso E."/>
            <person name="Fekete E."/>
            <person name="Flipphi M."/>
            <person name="Estrada C.G."/>
            <person name="Geysens S."/>
            <person name="Goldman G."/>
            <person name="de Groot P.W."/>
            <person name="Hansen K."/>
            <person name="Harris S.D."/>
            <person name="Heinekamp T."/>
            <person name="Helmstaedt K."/>
            <person name="Henrissat B."/>
            <person name="Hofmann G."/>
            <person name="Homan T."/>
            <person name="Horio T."/>
            <person name="Horiuchi H."/>
            <person name="James S."/>
            <person name="Jones M."/>
            <person name="Karaffa L."/>
            <person name="Karanyi Z."/>
            <person name="Kato M."/>
            <person name="Keller N."/>
            <person name="Kelly D.E."/>
            <person name="Kiel J.A."/>
            <person name="Kim J.M."/>
            <person name="van der Klei I.J."/>
            <person name="Klis F.M."/>
            <person name="Kovalchuk A."/>
            <person name="Krasevec N."/>
            <person name="Kubicek C.P."/>
            <person name="Liu B."/>
            <person name="Maccabe A."/>
            <person name="Meyer V."/>
            <person name="Mirabito P."/>
            <person name="Miskei M."/>
            <person name="Mos M."/>
            <person name="Mullins J."/>
            <person name="Nelson D.R."/>
            <person name="Nielsen J."/>
            <person name="Oakley B.R."/>
            <person name="Osmani S.A."/>
            <person name="Pakula T."/>
            <person name="Paszewski A."/>
            <person name="Paulsen I."/>
            <person name="Pilsyk S."/>
            <person name="Pocsi I."/>
            <person name="Punt P.J."/>
            <person name="Ram A.F."/>
            <person name="Ren Q."/>
            <person name="Robellet X."/>
            <person name="Robson G."/>
            <person name="Seiboth B."/>
            <person name="van Solingen P."/>
            <person name="Specht T."/>
            <person name="Sun J."/>
            <person name="Taheri-Talesh N."/>
            <person name="Takeshita N."/>
            <person name="Ussery D."/>
            <person name="vanKuyk P.A."/>
            <person name="Visser H."/>
            <person name="van de Vondervoort P.J."/>
            <person name="de Vries R.P."/>
            <person name="Walton J."/>
            <person name="Xiang X."/>
            <person name="Xiong Y."/>
            <person name="Zeng A.P."/>
            <person name="Brandt B.W."/>
            <person name="Cornell M.J."/>
            <person name="van den Hondel C.A."/>
            <person name="Visser J."/>
            <person name="Oliver S.G."/>
            <person name="Turner G."/>
        </authorList>
    </citation>
    <scope>GENOME REANNOTATION</scope>
    <source>
        <strain>FGSC A4 / ATCC 38163 / CBS 112.46 / NRRL 194 / M139</strain>
    </source>
</reference>
<evidence type="ECO:0000250" key="1"/>
<evidence type="ECO:0000305" key="2"/>
<gene>
    <name type="primary">rsm25</name>
    <name type="ORF">AN4434</name>
</gene>
<protein>
    <recommendedName>
        <fullName evidence="2">Small ribosomal subunit protein mS23</fullName>
    </recommendedName>
    <alternativeName>
        <fullName>37S ribosomal protein S25, mitochondrial</fullName>
    </alternativeName>
</protein>
<comment type="subunit">
    <text evidence="1">Component of the mitochondrial small ribosomal subunit.</text>
</comment>
<comment type="subcellular location">
    <subcellularLocation>
        <location evidence="1">Mitochondrion</location>
    </subcellularLocation>
</comment>
<comment type="similarity">
    <text evidence="2">Belongs to the mitochondrion-specific ribosomal protein mS23 family.</text>
</comment>
<proteinExistence type="inferred from homology"/>
<dbReference type="EMBL" id="AACD01000077">
    <property type="protein sequence ID" value="EAA60199.1"/>
    <property type="molecule type" value="Genomic_DNA"/>
</dbReference>
<dbReference type="EMBL" id="BN001303">
    <property type="protein sequence ID" value="CBF77532.1"/>
    <property type="molecule type" value="Genomic_DNA"/>
</dbReference>
<dbReference type="RefSeq" id="XP_662038.1">
    <property type="nucleotide sequence ID" value="XM_656946.1"/>
</dbReference>
<dbReference type="SMR" id="Q5B4U6"/>
<dbReference type="FunCoup" id="Q5B4U6">
    <property type="interactions" value="113"/>
</dbReference>
<dbReference type="STRING" id="227321.Q5B4U6"/>
<dbReference type="EnsemblFungi" id="CBF77532">
    <property type="protein sequence ID" value="CBF77532"/>
    <property type="gene ID" value="ANIA_04434"/>
</dbReference>
<dbReference type="KEGG" id="ani:ANIA_04434"/>
<dbReference type="VEuPathDB" id="FungiDB:AN4434"/>
<dbReference type="eggNOG" id="ENOG502RZQQ">
    <property type="taxonomic scope" value="Eukaryota"/>
</dbReference>
<dbReference type="HOGENOM" id="CLU_081350_0_0_1"/>
<dbReference type="InParanoid" id="Q5B4U6"/>
<dbReference type="OMA" id="ENWKIWA"/>
<dbReference type="OrthoDB" id="5542239at2759"/>
<dbReference type="Proteomes" id="UP000000560">
    <property type="component" value="Chromosome III"/>
</dbReference>
<dbReference type="GO" id="GO:0005763">
    <property type="term" value="C:mitochondrial small ribosomal subunit"/>
    <property type="evidence" value="ECO:0000318"/>
    <property type="project" value="GO_Central"/>
</dbReference>
<dbReference type="GO" id="GO:0003735">
    <property type="term" value="F:structural constituent of ribosome"/>
    <property type="evidence" value="ECO:0000318"/>
    <property type="project" value="GO_Central"/>
</dbReference>
<dbReference type="InterPro" id="IPR016939">
    <property type="entry name" value="Ribosomal_mS23_fun"/>
</dbReference>
<dbReference type="PANTHER" id="PTHR37799">
    <property type="entry name" value="37S RIBOSOMAL PROTEIN S25, MITOCHONDRIAL"/>
    <property type="match status" value="1"/>
</dbReference>
<dbReference type="PANTHER" id="PTHR37799:SF1">
    <property type="entry name" value="SMALL RIBOSOMAL SUBUNIT PROTEIN MS23"/>
    <property type="match status" value="1"/>
</dbReference>
<dbReference type="Pfam" id="PF13741">
    <property type="entry name" value="MRP-S25"/>
    <property type="match status" value="1"/>
</dbReference>
<dbReference type="PIRSF" id="PIRSF029764">
    <property type="entry name" value="RSM25"/>
    <property type="match status" value="1"/>
</dbReference>
<name>RT25_EMENI</name>
<organism>
    <name type="scientific">Emericella nidulans (strain FGSC A4 / ATCC 38163 / CBS 112.46 / NRRL 194 / M139)</name>
    <name type="common">Aspergillus nidulans</name>
    <dbReference type="NCBI Taxonomy" id="227321"/>
    <lineage>
        <taxon>Eukaryota</taxon>
        <taxon>Fungi</taxon>
        <taxon>Dikarya</taxon>
        <taxon>Ascomycota</taxon>
        <taxon>Pezizomycotina</taxon>
        <taxon>Eurotiomycetes</taxon>
        <taxon>Eurotiomycetidae</taxon>
        <taxon>Eurotiales</taxon>
        <taxon>Aspergillaceae</taxon>
        <taxon>Aspergillus</taxon>
        <taxon>Aspergillus subgen. Nidulantes</taxon>
    </lineage>
</organism>